<feature type="chain" id="PRO_1000185985" description="3-ketoacyl-CoA thiolase">
    <location>
        <begin position="1"/>
        <end position="436"/>
    </location>
</feature>
<feature type="active site" description="Acyl-thioester intermediate" evidence="1">
    <location>
        <position position="99"/>
    </location>
</feature>
<feature type="active site" description="Proton acceptor" evidence="1">
    <location>
        <position position="392"/>
    </location>
</feature>
<feature type="active site" description="Proton acceptor" evidence="1">
    <location>
        <position position="422"/>
    </location>
</feature>
<reference key="1">
    <citation type="journal article" date="2010" name="J. Bacteriol.">
        <title>Genome sequence of the deep-rooted Yersinia pestis strain Angola reveals new insights into the evolution and pangenome of the plague bacterium.</title>
        <authorList>
            <person name="Eppinger M."/>
            <person name="Worsham P.L."/>
            <person name="Nikolich M.P."/>
            <person name="Riley D.R."/>
            <person name="Sebastian Y."/>
            <person name="Mou S."/>
            <person name="Achtman M."/>
            <person name="Lindler L.E."/>
            <person name="Ravel J."/>
        </authorList>
    </citation>
    <scope>NUCLEOTIDE SEQUENCE [LARGE SCALE GENOMIC DNA]</scope>
    <source>
        <strain>Angola</strain>
    </source>
</reference>
<organism>
    <name type="scientific">Yersinia pestis bv. Antiqua (strain Angola)</name>
    <dbReference type="NCBI Taxonomy" id="349746"/>
    <lineage>
        <taxon>Bacteria</taxon>
        <taxon>Pseudomonadati</taxon>
        <taxon>Pseudomonadota</taxon>
        <taxon>Gammaproteobacteria</taxon>
        <taxon>Enterobacterales</taxon>
        <taxon>Yersiniaceae</taxon>
        <taxon>Yersinia</taxon>
    </lineage>
</organism>
<proteinExistence type="inferred from homology"/>
<name>FADI_YERPG</name>
<comment type="function">
    <text evidence="1">Catalyzes the final step of fatty acid oxidation in which acetyl-CoA is released and the CoA ester of a fatty acid two carbons shorter is formed.</text>
</comment>
<comment type="catalytic activity">
    <reaction evidence="1">
        <text>an acyl-CoA + acetyl-CoA = a 3-oxoacyl-CoA + CoA</text>
        <dbReference type="Rhea" id="RHEA:21564"/>
        <dbReference type="ChEBI" id="CHEBI:57287"/>
        <dbReference type="ChEBI" id="CHEBI:57288"/>
        <dbReference type="ChEBI" id="CHEBI:58342"/>
        <dbReference type="ChEBI" id="CHEBI:90726"/>
        <dbReference type="EC" id="2.3.1.16"/>
    </reaction>
</comment>
<comment type="pathway">
    <text evidence="1">Lipid metabolism; fatty acid beta-oxidation.</text>
</comment>
<comment type="subunit">
    <text evidence="1">Heterotetramer of two alpha chains (FadJ) and two beta chains (FadI).</text>
</comment>
<comment type="subcellular location">
    <subcellularLocation>
        <location evidence="1">Cytoplasm</location>
    </subcellularLocation>
</comment>
<comment type="similarity">
    <text evidence="1">Belongs to the thiolase-like superfamily. Thiolase family.</text>
</comment>
<keyword id="KW-0012">Acyltransferase</keyword>
<keyword id="KW-0963">Cytoplasm</keyword>
<keyword id="KW-0276">Fatty acid metabolism</keyword>
<keyword id="KW-0442">Lipid degradation</keyword>
<keyword id="KW-0443">Lipid metabolism</keyword>
<keyword id="KW-0808">Transferase</keyword>
<protein>
    <recommendedName>
        <fullName evidence="1">3-ketoacyl-CoA thiolase</fullName>
        <ecNumber evidence="1">2.3.1.16</ecNumber>
    </recommendedName>
    <alternativeName>
        <fullName evidence="1">ACSs</fullName>
    </alternativeName>
    <alternativeName>
        <fullName evidence="1">Acetyl-CoA acyltransferase</fullName>
    </alternativeName>
    <alternativeName>
        <fullName evidence="1">Acyl-CoA ligase</fullName>
    </alternativeName>
    <alternativeName>
        <fullName evidence="1">Beta-ketothiolase</fullName>
    </alternativeName>
    <alternativeName>
        <fullName evidence="1">Fatty acid oxidation complex subunit beta</fullName>
    </alternativeName>
</protein>
<dbReference type="EC" id="2.3.1.16" evidence="1"/>
<dbReference type="EMBL" id="CP000901">
    <property type="protein sequence ID" value="ABX88323.1"/>
    <property type="molecule type" value="Genomic_DNA"/>
</dbReference>
<dbReference type="RefSeq" id="WP_012228988.1">
    <property type="nucleotide sequence ID" value="NC_010159.1"/>
</dbReference>
<dbReference type="SMR" id="A9R7W9"/>
<dbReference type="KEGG" id="ypg:YpAngola_A0383"/>
<dbReference type="PATRIC" id="fig|349746.12.peg.1332"/>
<dbReference type="UniPathway" id="UPA00659"/>
<dbReference type="GO" id="GO:0005829">
    <property type="term" value="C:cytosol"/>
    <property type="evidence" value="ECO:0007669"/>
    <property type="project" value="TreeGrafter"/>
</dbReference>
<dbReference type="GO" id="GO:0003988">
    <property type="term" value="F:acetyl-CoA C-acyltransferase activity"/>
    <property type="evidence" value="ECO:0007669"/>
    <property type="project" value="UniProtKB-UniRule"/>
</dbReference>
<dbReference type="GO" id="GO:0006635">
    <property type="term" value="P:fatty acid beta-oxidation"/>
    <property type="evidence" value="ECO:0007669"/>
    <property type="project" value="UniProtKB-UniRule"/>
</dbReference>
<dbReference type="CDD" id="cd00751">
    <property type="entry name" value="thiolase"/>
    <property type="match status" value="1"/>
</dbReference>
<dbReference type="FunFam" id="3.40.47.10:FF:000011">
    <property type="entry name" value="3-ketoacyl-CoA thiolase"/>
    <property type="match status" value="1"/>
</dbReference>
<dbReference type="Gene3D" id="3.40.47.10">
    <property type="match status" value="1"/>
</dbReference>
<dbReference type="HAMAP" id="MF_01618">
    <property type="entry name" value="FadI"/>
    <property type="match status" value="1"/>
</dbReference>
<dbReference type="InterPro" id="IPR012806">
    <property type="entry name" value="Ac-CoA_C-AcTrfase_FadI"/>
</dbReference>
<dbReference type="InterPro" id="IPR002155">
    <property type="entry name" value="Thiolase"/>
</dbReference>
<dbReference type="InterPro" id="IPR016039">
    <property type="entry name" value="Thiolase-like"/>
</dbReference>
<dbReference type="InterPro" id="IPR020615">
    <property type="entry name" value="Thiolase_acyl_enz_int_AS"/>
</dbReference>
<dbReference type="InterPro" id="IPR020610">
    <property type="entry name" value="Thiolase_AS"/>
</dbReference>
<dbReference type="InterPro" id="IPR020617">
    <property type="entry name" value="Thiolase_C"/>
</dbReference>
<dbReference type="InterPro" id="IPR020613">
    <property type="entry name" value="Thiolase_CS"/>
</dbReference>
<dbReference type="InterPro" id="IPR020616">
    <property type="entry name" value="Thiolase_N"/>
</dbReference>
<dbReference type="NCBIfam" id="TIGR01930">
    <property type="entry name" value="AcCoA-C-Actrans"/>
    <property type="match status" value="1"/>
</dbReference>
<dbReference type="NCBIfam" id="TIGR02446">
    <property type="entry name" value="FadI"/>
    <property type="match status" value="1"/>
</dbReference>
<dbReference type="NCBIfam" id="NF006516">
    <property type="entry name" value="PRK08963.1"/>
    <property type="match status" value="1"/>
</dbReference>
<dbReference type="PANTHER" id="PTHR18919:SF107">
    <property type="entry name" value="ACETYL-COA ACETYLTRANSFERASE, CYTOSOLIC"/>
    <property type="match status" value="1"/>
</dbReference>
<dbReference type="PANTHER" id="PTHR18919">
    <property type="entry name" value="ACETYL-COA C-ACYLTRANSFERASE"/>
    <property type="match status" value="1"/>
</dbReference>
<dbReference type="Pfam" id="PF02803">
    <property type="entry name" value="Thiolase_C"/>
    <property type="match status" value="1"/>
</dbReference>
<dbReference type="Pfam" id="PF00108">
    <property type="entry name" value="Thiolase_N"/>
    <property type="match status" value="1"/>
</dbReference>
<dbReference type="PIRSF" id="PIRSF000429">
    <property type="entry name" value="Ac-CoA_Ac_transf"/>
    <property type="match status" value="1"/>
</dbReference>
<dbReference type="SUPFAM" id="SSF53901">
    <property type="entry name" value="Thiolase-like"/>
    <property type="match status" value="2"/>
</dbReference>
<dbReference type="PROSITE" id="PS00098">
    <property type="entry name" value="THIOLASE_1"/>
    <property type="match status" value="1"/>
</dbReference>
<dbReference type="PROSITE" id="PS00737">
    <property type="entry name" value="THIOLASE_2"/>
    <property type="match status" value="1"/>
</dbReference>
<dbReference type="PROSITE" id="PS00099">
    <property type="entry name" value="THIOLASE_3"/>
    <property type="match status" value="1"/>
</dbReference>
<evidence type="ECO:0000255" key="1">
    <source>
        <dbReference type="HAMAP-Rule" id="MF_01618"/>
    </source>
</evidence>
<sequence>MSKPLPLVTRQGDRIVIVNGLRTPFAKQATAYHGVPAVDLGKIVVSELLARSGISSELIDQLVFGQVVQMPEAPNIAREIVLGTGMSVHTDAYSVSRACATSFQAVANVAESIIAGSVDIAIAGGADSSSVLPIGVSKALARTLVDANKARSLSQKLKLFSRLRLRDLLPVAPAVAEYSTGLRMGDTAEQMAKTYGISREDQDALALRSHQLAAEAWQQGWLHDEVMTAYIPPYREAIIEDNNIRKDSILAQYAKLRPAFDRQHGSVTAANSTPLTDGAAAVLMMSESKAKALGLPPLGYLRSFAFSAIDVWQDMLLGPSYATPLALDRAGITLADLTLIDMHEAFAAQTLANLKMFASDTFAREKLGRSQAIGEVDMSKFNVLGGSIAYGHPFAATGARMITQTLNELRRRGGGLGLTTACAAGGLGAAMILEVE</sequence>
<gene>
    <name evidence="1" type="primary">fadI</name>
    <name type="ordered locus">YpAngola_A0383</name>
</gene>
<accession>A9R7W9</accession>